<name>MX1_ICTPU</name>
<protein>
    <recommendedName>
        <fullName>Interferon-induced GTP-binding protein Mx1</fullName>
    </recommendedName>
    <alternativeName>
        <fullName>Interferon-inducible Mx1 protein</fullName>
    </alternativeName>
</protein>
<evidence type="ECO:0000250" key="1"/>
<evidence type="ECO:0000255" key="2"/>
<evidence type="ECO:0000255" key="3">
    <source>
        <dbReference type="PROSITE-ProRule" id="PRU00720"/>
    </source>
</evidence>
<evidence type="ECO:0000255" key="4">
    <source>
        <dbReference type="PROSITE-ProRule" id="PRU01055"/>
    </source>
</evidence>
<reference key="1">
    <citation type="journal article" date="2004" name="Fish Shellfish Immunol.">
        <title>Cloning and characterisation of a channel catfish (Ictalurus punctatus) Mx gene.</title>
        <authorList>
            <person name="Plant K.P."/>
            <person name="Thune R.L."/>
        </authorList>
    </citation>
    <scope>NUCLEOTIDE SEQUENCE [MRNA]</scope>
    <source>
        <tissue>Liver</tissue>
    </source>
</reference>
<gene>
    <name type="primary">mx1</name>
    <name type="synonym">mx</name>
</gene>
<feature type="chain" id="PRO_0000292873" description="Interferon-induced GTP-binding protein Mx1">
    <location>
        <begin position="1"/>
        <end position="635"/>
    </location>
</feature>
<feature type="domain" description="Dynamin-type G" evidence="4">
    <location>
        <begin position="31"/>
        <end position="309"/>
    </location>
</feature>
<feature type="domain" description="GED" evidence="3">
    <location>
        <begin position="549"/>
        <end position="635"/>
    </location>
</feature>
<feature type="region of interest" description="G1 motif" evidence="4">
    <location>
        <begin position="41"/>
        <end position="48"/>
    </location>
</feature>
<feature type="region of interest" description="G2 motif" evidence="4">
    <location>
        <begin position="66"/>
        <end position="68"/>
    </location>
</feature>
<feature type="region of interest" description="G3 motif" evidence="4">
    <location>
        <begin position="147"/>
        <end position="150"/>
    </location>
</feature>
<feature type="region of interest" description="G4 motif" evidence="4">
    <location>
        <begin position="216"/>
        <end position="219"/>
    </location>
</feature>
<feature type="region of interest" description="G5 motif" evidence="4">
    <location>
        <begin position="248"/>
        <end position="251"/>
    </location>
</feature>
<feature type="binding site" evidence="2">
    <location>
        <begin position="41"/>
        <end position="48"/>
    </location>
    <ligand>
        <name>GTP</name>
        <dbReference type="ChEBI" id="CHEBI:37565"/>
    </ligand>
</feature>
<feature type="binding site" evidence="2">
    <location>
        <begin position="147"/>
        <end position="151"/>
    </location>
    <ligand>
        <name>GTP</name>
        <dbReference type="ChEBI" id="CHEBI:37565"/>
    </ligand>
</feature>
<feature type="binding site" evidence="2">
    <location>
        <begin position="216"/>
        <end position="219"/>
    </location>
    <ligand>
        <name>GTP</name>
        <dbReference type="ChEBI" id="CHEBI:37565"/>
    </ligand>
</feature>
<accession>Q7T2P0</accession>
<sequence length="635" mass="72585">MSASLSEQYEEKVRPCIDLIDSLRALGVEKDLALPAIAVIGDQSSGKSSVLEALSGVALPRGSGIVTRCPLELKMKRSREEDFWHGKIKYKKDHDEDYEEEIQNPADVEKKIREAQDHMAGVGVGISDELISLEVTSADVPDLTLIDLPGIARVAVKGQPENIGEQIKRLIKKFITKQETINLVVVPSNVDIATTEALKMAQEVDPNGERTLGILTKPDLVDKGTEETVVSIIHNEIIYLTKGYMIVRCRGQKEIMDRVSLHEATEKEKDFFKDHPHFSTLYEEGMATIPNLAEKLTLELVHHIELSLPRLEEQIDIKLADSQAELDRYGSGPPTEPAERICFLIDKVTAFTQDTINLTTGEELKNIQHLNIFSSLRRQFALWKMHLDDSGETFKSRIEKEVNEYEEKYRGRELPGFINYKTFEVIVKDQIKQLEEPAIRRLKEISDLIRKGFIQLAQNSFLGFPNLLKMAKTKIECIKQVKESEAETMLRTQFKMELIIYTQDSMYSDTLSTLKVKEEEGERQKVGILPNSYSISCSLYNHSNNRATLEELMRHLKSYYSIASKRLADQLPLVIRYLLLQESAAQLQREMLQLMQDKNAIDHLLKEDHDIGNKRNNLQSRQKRLMEARNYLVKF</sequence>
<dbReference type="EMBL" id="AY095349">
    <property type="protein sequence ID" value="AAM23274.1"/>
    <property type="molecule type" value="mRNA"/>
</dbReference>
<dbReference type="RefSeq" id="NP_001187103.1">
    <property type="nucleotide sequence ID" value="NM_001200174.1"/>
</dbReference>
<dbReference type="SMR" id="Q7T2P0"/>
<dbReference type="STRING" id="7998.ENSIPUP00000002507"/>
<dbReference type="GeneID" id="100304594"/>
<dbReference type="KEGG" id="ipu:100304594"/>
<dbReference type="CTD" id="360142"/>
<dbReference type="OMA" id="DECTGWE"/>
<dbReference type="OrthoDB" id="5061070at2759"/>
<dbReference type="Proteomes" id="UP000221080">
    <property type="component" value="Chromosome 26"/>
</dbReference>
<dbReference type="GO" id="GO:0005737">
    <property type="term" value="C:cytoplasm"/>
    <property type="evidence" value="ECO:0007669"/>
    <property type="project" value="UniProtKB-SubCell"/>
</dbReference>
<dbReference type="GO" id="GO:0005874">
    <property type="term" value="C:microtubule"/>
    <property type="evidence" value="ECO:0007669"/>
    <property type="project" value="TreeGrafter"/>
</dbReference>
<dbReference type="GO" id="GO:0005634">
    <property type="term" value="C:nucleus"/>
    <property type="evidence" value="ECO:0007669"/>
    <property type="project" value="TreeGrafter"/>
</dbReference>
<dbReference type="GO" id="GO:0005886">
    <property type="term" value="C:plasma membrane"/>
    <property type="evidence" value="ECO:0007669"/>
    <property type="project" value="TreeGrafter"/>
</dbReference>
<dbReference type="GO" id="GO:0098793">
    <property type="term" value="C:presynapse"/>
    <property type="evidence" value="ECO:0007669"/>
    <property type="project" value="GOC"/>
</dbReference>
<dbReference type="GO" id="GO:0005525">
    <property type="term" value="F:GTP binding"/>
    <property type="evidence" value="ECO:0007669"/>
    <property type="project" value="UniProtKB-KW"/>
</dbReference>
<dbReference type="GO" id="GO:0003924">
    <property type="term" value="F:GTPase activity"/>
    <property type="evidence" value="ECO:0007669"/>
    <property type="project" value="InterPro"/>
</dbReference>
<dbReference type="GO" id="GO:0008017">
    <property type="term" value="F:microtubule binding"/>
    <property type="evidence" value="ECO:0007669"/>
    <property type="project" value="TreeGrafter"/>
</dbReference>
<dbReference type="GO" id="GO:0051607">
    <property type="term" value="P:defense response to virus"/>
    <property type="evidence" value="ECO:0007669"/>
    <property type="project" value="TreeGrafter"/>
</dbReference>
<dbReference type="GO" id="GO:0031623">
    <property type="term" value="P:receptor internalization"/>
    <property type="evidence" value="ECO:0007669"/>
    <property type="project" value="TreeGrafter"/>
</dbReference>
<dbReference type="GO" id="GO:0016185">
    <property type="term" value="P:synaptic vesicle budding from presynaptic endocytic zone membrane"/>
    <property type="evidence" value="ECO:0007669"/>
    <property type="project" value="TreeGrafter"/>
</dbReference>
<dbReference type="CDD" id="cd08771">
    <property type="entry name" value="DLP_1"/>
    <property type="match status" value="1"/>
</dbReference>
<dbReference type="FunFam" id="1.20.120.1240:FF:000007">
    <property type="entry name" value="Interferon-induced GTP-binding protein Mx1"/>
    <property type="match status" value="1"/>
</dbReference>
<dbReference type="FunFam" id="3.40.50.300:FF:000621">
    <property type="entry name" value="Interferon-induced GTP-binding protein Mx1"/>
    <property type="match status" value="1"/>
</dbReference>
<dbReference type="Gene3D" id="1.20.120.1240">
    <property type="entry name" value="Dynamin, middle domain"/>
    <property type="match status" value="1"/>
</dbReference>
<dbReference type="Gene3D" id="3.40.50.300">
    <property type="entry name" value="P-loop containing nucleotide triphosphate hydrolases"/>
    <property type="match status" value="1"/>
</dbReference>
<dbReference type="InterPro" id="IPR022812">
    <property type="entry name" value="Dynamin"/>
</dbReference>
<dbReference type="InterPro" id="IPR001401">
    <property type="entry name" value="Dynamin_GTPase"/>
</dbReference>
<dbReference type="InterPro" id="IPR019762">
    <property type="entry name" value="Dynamin_GTPase_CS"/>
</dbReference>
<dbReference type="InterPro" id="IPR045063">
    <property type="entry name" value="Dynamin_N"/>
</dbReference>
<dbReference type="InterPro" id="IPR000375">
    <property type="entry name" value="Dynamin_stalk"/>
</dbReference>
<dbReference type="InterPro" id="IPR030381">
    <property type="entry name" value="G_DYNAMIN_dom"/>
</dbReference>
<dbReference type="InterPro" id="IPR003130">
    <property type="entry name" value="GED"/>
</dbReference>
<dbReference type="InterPro" id="IPR020850">
    <property type="entry name" value="GED_dom"/>
</dbReference>
<dbReference type="InterPro" id="IPR027417">
    <property type="entry name" value="P-loop_NTPase"/>
</dbReference>
<dbReference type="PANTHER" id="PTHR11566">
    <property type="entry name" value="DYNAMIN"/>
    <property type="match status" value="1"/>
</dbReference>
<dbReference type="PANTHER" id="PTHR11566:SF225">
    <property type="entry name" value="INTERFERON-INDUCED GTP-BINDING PROTEIN MX-RELATED"/>
    <property type="match status" value="1"/>
</dbReference>
<dbReference type="Pfam" id="PF01031">
    <property type="entry name" value="Dynamin_M"/>
    <property type="match status" value="1"/>
</dbReference>
<dbReference type="Pfam" id="PF00350">
    <property type="entry name" value="Dynamin_N"/>
    <property type="match status" value="1"/>
</dbReference>
<dbReference type="Pfam" id="PF02212">
    <property type="entry name" value="GED"/>
    <property type="match status" value="1"/>
</dbReference>
<dbReference type="PRINTS" id="PR00195">
    <property type="entry name" value="DYNAMIN"/>
</dbReference>
<dbReference type="SMART" id="SM00053">
    <property type="entry name" value="DYNc"/>
    <property type="match status" value="1"/>
</dbReference>
<dbReference type="SMART" id="SM00302">
    <property type="entry name" value="GED"/>
    <property type="match status" value="1"/>
</dbReference>
<dbReference type="SUPFAM" id="SSF52540">
    <property type="entry name" value="P-loop containing nucleoside triphosphate hydrolases"/>
    <property type="match status" value="1"/>
</dbReference>
<dbReference type="PROSITE" id="PS00410">
    <property type="entry name" value="G_DYNAMIN_1"/>
    <property type="match status" value="1"/>
</dbReference>
<dbReference type="PROSITE" id="PS51718">
    <property type="entry name" value="G_DYNAMIN_2"/>
    <property type="match status" value="1"/>
</dbReference>
<dbReference type="PROSITE" id="PS51388">
    <property type="entry name" value="GED"/>
    <property type="match status" value="1"/>
</dbReference>
<organism>
    <name type="scientific">Ictalurus punctatus</name>
    <name type="common">Channel catfish</name>
    <name type="synonym">Silurus punctatus</name>
    <dbReference type="NCBI Taxonomy" id="7998"/>
    <lineage>
        <taxon>Eukaryota</taxon>
        <taxon>Metazoa</taxon>
        <taxon>Chordata</taxon>
        <taxon>Craniata</taxon>
        <taxon>Vertebrata</taxon>
        <taxon>Euteleostomi</taxon>
        <taxon>Actinopterygii</taxon>
        <taxon>Neopterygii</taxon>
        <taxon>Teleostei</taxon>
        <taxon>Ostariophysi</taxon>
        <taxon>Siluriformes</taxon>
        <taxon>Ictaluridae</taxon>
        <taxon>Ictalurus</taxon>
    </lineage>
</organism>
<proteinExistence type="evidence at transcript level"/>
<comment type="subcellular location">
    <subcellularLocation>
        <location evidence="1">Cytoplasm</location>
    </subcellularLocation>
</comment>
<comment type="induction">
    <text>By interferons.</text>
</comment>
<comment type="similarity">
    <text evidence="4">Belongs to the TRAFAC class dynamin-like GTPase superfamily. Dynamin/Fzo/YdjA family.</text>
</comment>
<keyword id="KW-0963">Cytoplasm</keyword>
<keyword id="KW-0342">GTP-binding</keyword>
<keyword id="KW-0547">Nucleotide-binding</keyword>